<name>SECA_BACLD</name>
<protein>
    <recommendedName>
        <fullName evidence="1">Protein translocase subunit SecA</fullName>
        <ecNumber evidence="1">7.4.2.8</ecNumber>
    </recommendedName>
</protein>
<organism>
    <name type="scientific">Bacillus licheniformis (strain ATCC 14580 / DSM 13 / JCM 2505 / CCUG 7422 / NBRC 12200 / NCIMB 9375 / NCTC 10341 / NRRL NRS-1264 / Gibson 46)</name>
    <dbReference type="NCBI Taxonomy" id="279010"/>
    <lineage>
        <taxon>Bacteria</taxon>
        <taxon>Bacillati</taxon>
        <taxon>Bacillota</taxon>
        <taxon>Bacilli</taxon>
        <taxon>Bacillales</taxon>
        <taxon>Bacillaceae</taxon>
        <taxon>Bacillus</taxon>
    </lineage>
</organism>
<evidence type="ECO:0000255" key="1">
    <source>
        <dbReference type="HAMAP-Rule" id="MF_01382"/>
    </source>
</evidence>
<evidence type="ECO:0000256" key="2">
    <source>
        <dbReference type="SAM" id="MobiDB-lite"/>
    </source>
</evidence>
<reference key="1">
    <citation type="journal article" date="2004" name="J. Mol. Microbiol. Biotechnol.">
        <title>The complete genome sequence of Bacillus licheniformis DSM13, an organism with great industrial potential.</title>
        <authorList>
            <person name="Veith B."/>
            <person name="Herzberg C."/>
            <person name="Steckel S."/>
            <person name="Feesche J."/>
            <person name="Maurer K.H."/>
            <person name="Ehrenreich P."/>
            <person name="Baeumer S."/>
            <person name="Henne A."/>
            <person name="Liesegang H."/>
            <person name="Merkl R."/>
            <person name="Ehrenreich A."/>
            <person name="Gottschalk G."/>
        </authorList>
    </citation>
    <scope>NUCLEOTIDE SEQUENCE [LARGE SCALE GENOMIC DNA]</scope>
    <source>
        <strain>ATCC 14580 / DSM 13 / JCM 2505 / CCUG 7422 / NBRC 12200 / NCIMB 9375 / NCTC 10341 / NRRL NRS-1264 / Gibson 46</strain>
    </source>
</reference>
<reference key="2">
    <citation type="journal article" date="2004" name="Genome Biol.">
        <title>Complete genome sequence of the industrial bacterium Bacillus licheniformis and comparisons with closely related Bacillus species.</title>
        <authorList>
            <person name="Rey M.W."/>
            <person name="Ramaiya P."/>
            <person name="Nelson B.A."/>
            <person name="Brody-Karpin S.D."/>
            <person name="Zaretsky E.J."/>
            <person name="Tang M."/>
            <person name="Lopez de Leon A."/>
            <person name="Xiang H."/>
            <person name="Gusti V."/>
            <person name="Clausen I.G."/>
            <person name="Olsen P.B."/>
            <person name="Rasmussen M.D."/>
            <person name="Andersen J.T."/>
            <person name="Joergensen P.L."/>
            <person name="Larsen T.S."/>
            <person name="Sorokin A."/>
            <person name="Bolotin A."/>
            <person name="Lapidus A."/>
            <person name="Galleron N."/>
            <person name="Ehrlich S.D."/>
            <person name="Berka R.M."/>
        </authorList>
    </citation>
    <scope>NUCLEOTIDE SEQUENCE [LARGE SCALE GENOMIC DNA]</scope>
    <source>
        <strain>ATCC 14580 / DSM 13 / JCM 2505 / CCUG 7422 / NBRC 12200 / NCIMB 9375 / NCTC 10341 / NRRL NRS-1264 / Gibson 46</strain>
    </source>
</reference>
<proteinExistence type="inferred from homology"/>
<sequence length="841" mass="95327">MLGILNKVFDPTKRTLSRYEKKANEIDALKADIEKLSDEALKQKTIEFKERLEKGETVDDLLVEAFAVVREASRRVTGMFPFKVQLMGGVALHEGNIAEMKTGEGKTLTSTMPVYLNALSGKGVHVVTVNEYLASRDAEEMGKIFEFLGLTVGLNLNSLSKDEKREAYAADITYSTNNELGFDYLRDNMVLYKEQMVQRPLHFAVIDEVDSILIDEARTPLIISGQAAKSTKLYVQANAFVRTLKADQDYTYDVKTKGVQLTEEGMTKAEKAFGIENLFDVRHVALNHHIAQALKAHAAMHKDVDYVVEDGQVVIVDSFTGRLMKGRRYSDGLHQAIEAKEGLEIQNESMTLATITFQNYFRMYEKLAGMTGTAKTEEEEFRNIYNMQVVTIPTNKPIARDDRPDLIYRTMEGKFKAVAEDVAQRYMVGQPVLVGTVAVETSELISRLLKNKGIPHQVLNAKNHEREAQIIEDAGQKGAVTIATNMAGRGTDIKLGEGVKELGGLAVIGTERHESRRIDNQLRGRSGRQGDPGITQFYLSMEDELMKRFGAERTMAMLDRFGMDDSTPIQSKMVSRAVESSQKRVEGNNFDARKQLLQYDDVLRQQREVIYKQRFEVIDSDNLRSIVENMIKASLERAVASYTPKEDLPEEWNLDGLVELVNANFLDEGGVEKSDIFGKEPEEITELIYDRIKTKYDEKEERYGSEQMREFEKVIVLREVDTKWMDHIDAMDQLRQGIHLRAYAQTNPLREYQMEGFAMFENMIAAIEDDVAKFVMKAEIENNLEREEVIQGQTTAHQPKEGDEEKQAKKKPVRKAVDIGRNDPCYCGSGKKYKNCCGRTE</sequence>
<dbReference type="EC" id="7.4.2.8" evidence="1"/>
<dbReference type="EMBL" id="CP000002">
    <property type="protein sequence ID" value="AAU25217.1"/>
    <property type="molecule type" value="Genomic_DNA"/>
</dbReference>
<dbReference type="EMBL" id="AE017333">
    <property type="protein sequence ID" value="AAU42589.1"/>
    <property type="molecule type" value="Genomic_DNA"/>
</dbReference>
<dbReference type="RefSeq" id="WP_003185681.1">
    <property type="nucleotide sequence ID" value="NC_006322.1"/>
</dbReference>
<dbReference type="SMR" id="Q65EC5"/>
<dbReference type="STRING" id="279010.BL03381"/>
<dbReference type="GeneID" id="92859652"/>
<dbReference type="KEGG" id="bld:BLi03773"/>
<dbReference type="KEGG" id="bli:BL03381"/>
<dbReference type="eggNOG" id="COG0653">
    <property type="taxonomic scope" value="Bacteria"/>
</dbReference>
<dbReference type="HOGENOM" id="CLU_005314_3_0_9"/>
<dbReference type="Proteomes" id="UP000000606">
    <property type="component" value="Chromosome"/>
</dbReference>
<dbReference type="GO" id="GO:0031522">
    <property type="term" value="C:cell envelope Sec protein transport complex"/>
    <property type="evidence" value="ECO:0007669"/>
    <property type="project" value="TreeGrafter"/>
</dbReference>
<dbReference type="GO" id="GO:0005829">
    <property type="term" value="C:cytosol"/>
    <property type="evidence" value="ECO:0007669"/>
    <property type="project" value="TreeGrafter"/>
</dbReference>
<dbReference type="GO" id="GO:0005886">
    <property type="term" value="C:plasma membrane"/>
    <property type="evidence" value="ECO:0007669"/>
    <property type="project" value="UniProtKB-SubCell"/>
</dbReference>
<dbReference type="GO" id="GO:0005524">
    <property type="term" value="F:ATP binding"/>
    <property type="evidence" value="ECO:0007669"/>
    <property type="project" value="UniProtKB-UniRule"/>
</dbReference>
<dbReference type="GO" id="GO:0046872">
    <property type="term" value="F:metal ion binding"/>
    <property type="evidence" value="ECO:0007669"/>
    <property type="project" value="UniProtKB-KW"/>
</dbReference>
<dbReference type="GO" id="GO:0008564">
    <property type="term" value="F:protein-exporting ATPase activity"/>
    <property type="evidence" value="ECO:0007669"/>
    <property type="project" value="UniProtKB-EC"/>
</dbReference>
<dbReference type="GO" id="GO:0065002">
    <property type="term" value="P:intracellular protein transmembrane transport"/>
    <property type="evidence" value="ECO:0007669"/>
    <property type="project" value="UniProtKB-UniRule"/>
</dbReference>
<dbReference type="GO" id="GO:0017038">
    <property type="term" value="P:protein import"/>
    <property type="evidence" value="ECO:0007669"/>
    <property type="project" value="InterPro"/>
</dbReference>
<dbReference type="GO" id="GO:0006605">
    <property type="term" value="P:protein targeting"/>
    <property type="evidence" value="ECO:0007669"/>
    <property type="project" value="UniProtKB-UniRule"/>
</dbReference>
<dbReference type="GO" id="GO:0043952">
    <property type="term" value="P:protein transport by the Sec complex"/>
    <property type="evidence" value="ECO:0007669"/>
    <property type="project" value="TreeGrafter"/>
</dbReference>
<dbReference type="CDD" id="cd17928">
    <property type="entry name" value="DEXDc_SecA"/>
    <property type="match status" value="1"/>
</dbReference>
<dbReference type="CDD" id="cd18803">
    <property type="entry name" value="SF2_C_secA"/>
    <property type="match status" value="1"/>
</dbReference>
<dbReference type="FunFam" id="1.10.3060.10:FF:000002">
    <property type="entry name" value="Preprotein translocase subunit SecA"/>
    <property type="match status" value="1"/>
</dbReference>
<dbReference type="FunFam" id="3.40.50.300:FF:000081">
    <property type="entry name" value="Preprotein translocase subunit SecA"/>
    <property type="match status" value="1"/>
</dbReference>
<dbReference type="FunFam" id="3.40.50.300:FF:000429">
    <property type="entry name" value="Preprotein translocase subunit SecA"/>
    <property type="match status" value="1"/>
</dbReference>
<dbReference type="FunFam" id="3.90.1440.10:FF:000001">
    <property type="entry name" value="Preprotein translocase subunit SecA"/>
    <property type="match status" value="1"/>
</dbReference>
<dbReference type="Gene3D" id="1.10.3060.10">
    <property type="entry name" value="Helical scaffold and wing domains of SecA"/>
    <property type="match status" value="1"/>
</dbReference>
<dbReference type="Gene3D" id="3.40.50.300">
    <property type="entry name" value="P-loop containing nucleotide triphosphate hydrolases"/>
    <property type="match status" value="3"/>
</dbReference>
<dbReference type="Gene3D" id="3.90.1440.10">
    <property type="entry name" value="SecA, preprotein cross-linking domain"/>
    <property type="match status" value="1"/>
</dbReference>
<dbReference type="HAMAP" id="MF_01382">
    <property type="entry name" value="SecA"/>
    <property type="match status" value="1"/>
</dbReference>
<dbReference type="InterPro" id="IPR014001">
    <property type="entry name" value="Helicase_ATP-bd"/>
</dbReference>
<dbReference type="InterPro" id="IPR001650">
    <property type="entry name" value="Helicase_C-like"/>
</dbReference>
<dbReference type="InterPro" id="IPR027417">
    <property type="entry name" value="P-loop_NTPase"/>
</dbReference>
<dbReference type="InterPro" id="IPR004027">
    <property type="entry name" value="SEC_C_motif"/>
</dbReference>
<dbReference type="InterPro" id="IPR000185">
    <property type="entry name" value="SecA"/>
</dbReference>
<dbReference type="InterPro" id="IPR020937">
    <property type="entry name" value="SecA_CS"/>
</dbReference>
<dbReference type="InterPro" id="IPR011115">
    <property type="entry name" value="SecA_DEAD"/>
</dbReference>
<dbReference type="InterPro" id="IPR014018">
    <property type="entry name" value="SecA_motor_DEAD"/>
</dbReference>
<dbReference type="InterPro" id="IPR011130">
    <property type="entry name" value="SecA_preprotein_X-link_dom"/>
</dbReference>
<dbReference type="InterPro" id="IPR044722">
    <property type="entry name" value="SecA_SF2_C"/>
</dbReference>
<dbReference type="InterPro" id="IPR011116">
    <property type="entry name" value="SecA_Wing/Scaffold"/>
</dbReference>
<dbReference type="InterPro" id="IPR036266">
    <property type="entry name" value="SecA_Wing/Scaffold_sf"/>
</dbReference>
<dbReference type="InterPro" id="IPR036670">
    <property type="entry name" value="SecA_X-link_sf"/>
</dbReference>
<dbReference type="NCBIfam" id="NF006630">
    <property type="entry name" value="PRK09200.1"/>
    <property type="match status" value="1"/>
</dbReference>
<dbReference type="NCBIfam" id="NF009538">
    <property type="entry name" value="PRK12904.1"/>
    <property type="match status" value="1"/>
</dbReference>
<dbReference type="NCBIfam" id="TIGR00963">
    <property type="entry name" value="secA"/>
    <property type="match status" value="1"/>
</dbReference>
<dbReference type="PANTHER" id="PTHR30612:SF0">
    <property type="entry name" value="CHLOROPLAST PROTEIN-TRANSPORTING ATPASE"/>
    <property type="match status" value="1"/>
</dbReference>
<dbReference type="PANTHER" id="PTHR30612">
    <property type="entry name" value="SECA INNER MEMBRANE COMPONENT OF SEC PROTEIN SECRETION SYSTEM"/>
    <property type="match status" value="1"/>
</dbReference>
<dbReference type="Pfam" id="PF21090">
    <property type="entry name" value="P-loop_SecA"/>
    <property type="match status" value="1"/>
</dbReference>
<dbReference type="Pfam" id="PF02810">
    <property type="entry name" value="SEC-C"/>
    <property type="match status" value="1"/>
</dbReference>
<dbReference type="Pfam" id="PF07517">
    <property type="entry name" value="SecA_DEAD"/>
    <property type="match status" value="1"/>
</dbReference>
<dbReference type="Pfam" id="PF01043">
    <property type="entry name" value="SecA_PP_bind"/>
    <property type="match status" value="1"/>
</dbReference>
<dbReference type="Pfam" id="PF07516">
    <property type="entry name" value="SecA_SW"/>
    <property type="match status" value="1"/>
</dbReference>
<dbReference type="PRINTS" id="PR00906">
    <property type="entry name" value="SECA"/>
</dbReference>
<dbReference type="SMART" id="SM00957">
    <property type="entry name" value="SecA_DEAD"/>
    <property type="match status" value="1"/>
</dbReference>
<dbReference type="SMART" id="SM00958">
    <property type="entry name" value="SecA_PP_bind"/>
    <property type="match status" value="1"/>
</dbReference>
<dbReference type="SUPFAM" id="SSF81886">
    <property type="entry name" value="Helical scaffold and wing domains of SecA"/>
    <property type="match status" value="1"/>
</dbReference>
<dbReference type="SUPFAM" id="SSF52540">
    <property type="entry name" value="P-loop containing nucleoside triphosphate hydrolases"/>
    <property type="match status" value="2"/>
</dbReference>
<dbReference type="SUPFAM" id="SSF81767">
    <property type="entry name" value="Pre-protein crosslinking domain of SecA"/>
    <property type="match status" value="1"/>
</dbReference>
<dbReference type="PROSITE" id="PS01312">
    <property type="entry name" value="SECA"/>
    <property type="match status" value="1"/>
</dbReference>
<dbReference type="PROSITE" id="PS51196">
    <property type="entry name" value="SECA_MOTOR_DEAD"/>
    <property type="match status" value="1"/>
</dbReference>
<comment type="function">
    <text evidence="1">Part of the Sec protein translocase complex. Interacts with the SecYEG preprotein conducting channel. Has a central role in coupling the hydrolysis of ATP to the transfer of proteins into and across the cell membrane, serving as an ATP-driven molecular motor driving the stepwise translocation of polypeptide chains across the membrane.</text>
</comment>
<comment type="catalytic activity">
    <reaction evidence="1">
        <text>ATP + H2O + cellular proteinSide 1 = ADP + phosphate + cellular proteinSide 2.</text>
        <dbReference type="EC" id="7.4.2.8"/>
    </reaction>
</comment>
<comment type="cofactor">
    <cofactor evidence="1">
        <name>Zn(2+)</name>
        <dbReference type="ChEBI" id="CHEBI:29105"/>
    </cofactor>
    <text evidence="1">May bind 1 zinc ion per subunit.</text>
</comment>
<comment type="subunit">
    <text evidence="1">Monomer and homodimer. Part of the essential Sec protein translocation apparatus which comprises SecA, SecYEG and auxiliary proteins SecDF. Other proteins may also be involved.</text>
</comment>
<comment type="subcellular location">
    <subcellularLocation>
        <location evidence="1">Cell membrane</location>
        <topology evidence="1">Peripheral membrane protein</topology>
        <orientation evidence="1">Cytoplasmic side</orientation>
    </subcellularLocation>
    <subcellularLocation>
        <location evidence="1">Cytoplasm</location>
    </subcellularLocation>
    <text evidence="1">Distribution is 50-50.</text>
</comment>
<comment type="similarity">
    <text evidence="1">Belongs to the SecA family.</text>
</comment>
<gene>
    <name evidence="1" type="primary">secA</name>
    <name type="ordered locus">BLi03773</name>
    <name type="ordered locus">BL03381</name>
</gene>
<keyword id="KW-0067">ATP-binding</keyword>
<keyword id="KW-1003">Cell membrane</keyword>
<keyword id="KW-0963">Cytoplasm</keyword>
<keyword id="KW-0472">Membrane</keyword>
<keyword id="KW-0479">Metal-binding</keyword>
<keyword id="KW-0547">Nucleotide-binding</keyword>
<keyword id="KW-0653">Protein transport</keyword>
<keyword id="KW-1185">Reference proteome</keyword>
<keyword id="KW-1278">Translocase</keyword>
<keyword id="KW-0811">Translocation</keyword>
<keyword id="KW-0813">Transport</keyword>
<keyword id="KW-0862">Zinc</keyword>
<feature type="chain" id="PRO_0000318318" description="Protein translocase subunit SecA">
    <location>
        <begin position="1"/>
        <end position="841"/>
    </location>
</feature>
<feature type="region of interest" description="Disordered" evidence="2">
    <location>
        <begin position="790"/>
        <end position="814"/>
    </location>
</feature>
<feature type="compositionally biased region" description="Basic and acidic residues" evidence="2">
    <location>
        <begin position="798"/>
        <end position="807"/>
    </location>
</feature>
<feature type="binding site" evidence="1">
    <location>
        <position position="85"/>
    </location>
    <ligand>
        <name>ATP</name>
        <dbReference type="ChEBI" id="CHEBI:30616"/>
    </ligand>
</feature>
<feature type="binding site" evidence="1">
    <location>
        <begin position="103"/>
        <end position="107"/>
    </location>
    <ligand>
        <name>ATP</name>
        <dbReference type="ChEBI" id="CHEBI:30616"/>
    </ligand>
</feature>
<feature type="binding site" evidence="1">
    <location>
        <position position="492"/>
    </location>
    <ligand>
        <name>ATP</name>
        <dbReference type="ChEBI" id="CHEBI:30616"/>
    </ligand>
</feature>
<feature type="binding site" evidence="1">
    <location>
        <position position="825"/>
    </location>
    <ligand>
        <name>Zn(2+)</name>
        <dbReference type="ChEBI" id="CHEBI:29105"/>
    </ligand>
</feature>
<feature type="binding site" evidence="1">
    <location>
        <position position="827"/>
    </location>
    <ligand>
        <name>Zn(2+)</name>
        <dbReference type="ChEBI" id="CHEBI:29105"/>
    </ligand>
</feature>
<feature type="binding site" evidence="1">
    <location>
        <position position="836"/>
    </location>
    <ligand>
        <name>Zn(2+)</name>
        <dbReference type="ChEBI" id="CHEBI:29105"/>
    </ligand>
</feature>
<feature type="binding site" evidence="1">
    <location>
        <position position="837"/>
    </location>
    <ligand>
        <name>Zn(2+)</name>
        <dbReference type="ChEBI" id="CHEBI:29105"/>
    </ligand>
</feature>
<accession>Q65EC5</accession>
<accession>Q62PU4</accession>